<proteinExistence type="inferred from homology"/>
<organism>
    <name type="scientific">Rickettsia typhi (strain ATCC VR-144 / Wilmington)</name>
    <dbReference type="NCBI Taxonomy" id="257363"/>
    <lineage>
        <taxon>Bacteria</taxon>
        <taxon>Pseudomonadati</taxon>
        <taxon>Pseudomonadota</taxon>
        <taxon>Alphaproteobacteria</taxon>
        <taxon>Rickettsiales</taxon>
        <taxon>Rickettsiaceae</taxon>
        <taxon>Rickettsieae</taxon>
        <taxon>Rickettsia</taxon>
        <taxon>typhus group</taxon>
    </lineage>
</organism>
<sequence length="289" mass="33493">MKKLSFQQIILILQNYWQDYGCAILQPYDAHVGAGTFHPATVLRCLGTKPWFVAYVQPSRRPCDSRYGMHPNRMQHYYQFQVILKPSPDNIQDLYLKSLECLNLDLKTHDIRFVEDDWESPTLGASGLGWEVWCDGMEVSQFTYMQQVGGIECYPVACEITYGLERLALYIQGIDEVKELDWNGQIGEKALKYGEVDFEAERQFSKYNLEFADSEMLLRHFKDSGEQCERLVNVNLPMPAYDECLKASHYFNQLNALGVISVTERASYILRVRYLAKICCIKWLELSSE</sequence>
<reference key="1">
    <citation type="journal article" date="2004" name="J. Bacteriol.">
        <title>Complete genome sequence of Rickettsia typhi and comparison with sequences of other Rickettsiae.</title>
        <authorList>
            <person name="McLeod M.P."/>
            <person name="Qin X."/>
            <person name="Karpathy S.E."/>
            <person name="Gioia J."/>
            <person name="Highlander S.K."/>
            <person name="Fox G.E."/>
            <person name="McNeill T.Z."/>
            <person name="Jiang H."/>
            <person name="Muzny D."/>
            <person name="Jacob L.S."/>
            <person name="Hawes A.C."/>
            <person name="Sodergren E."/>
            <person name="Gill R."/>
            <person name="Hume J."/>
            <person name="Morgan M."/>
            <person name="Fan G."/>
            <person name="Amin A.G."/>
            <person name="Gibbs R.A."/>
            <person name="Hong C."/>
            <person name="Yu X.-J."/>
            <person name="Walker D.H."/>
            <person name="Weinstock G.M."/>
        </authorList>
    </citation>
    <scope>NUCLEOTIDE SEQUENCE [LARGE SCALE GENOMIC DNA]</scope>
    <source>
        <strain>ATCC VR-144 / Wilmington</strain>
    </source>
</reference>
<feature type="chain" id="PRO_0000274896" description="Glycine--tRNA ligase alpha subunit">
    <location>
        <begin position="1"/>
        <end position="289"/>
    </location>
</feature>
<dbReference type="EC" id="6.1.1.14" evidence="1"/>
<dbReference type="EMBL" id="AE017197">
    <property type="protein sequence ID" value="AAU04293.1"/>
    <property type="molecule type" value="Genomic_DNA"/>
</dbReference>
<dbReference type="RefSeq" id="WP_011191267.1">
    <property type="nucleotide sequence ID" value="NC_006142.1"/>
</dbReference>
<dbReference type="SMR" id="Q68VR3"/>
<dbReference type="KEGG" id="rty:RT0839"/>
<dbReference type="eggNOG" id="COG0752">
    <property type="taxonomic scope" value="Bacteria"/>
</dbReference>
<dbReference type="HOGENOM" id="CLU_057066_1_0_5"/>
<dbReference type="OrthoDB" id="9802183at2"/>
<dbReference type="Proteomes" id="UP000000604">
    <property type="component" value="Chromosome"/>
</dbReference>
<dbReference type="GO" id="GO:0005829">
    <property type="term" value="C:cytosol"/>
    <property type="evidence" value="ECO:0007669"/>
    <property type="project" value="TreeGrafter"/>
</dbReference>
<dbReference type="GO" id="GO:0005524">
    <property type="term" value="F:ATP binding"/>
    <property type="evidence" value="ECO:0007669"/>
    <property type="project" value="UniProtKB-UniRule"/>
</dbReference>
<dbReference type="GO" id="GO:0004820">
    <property type="term" value="F:glycine-tRNA ligase activity"/>
    <property type="evidence" value="ECO:0007669"/>
    <property type="project" value="UniProtKB-UniRule"/>
</dbReference>
<dbReference type="GO" id="GO:0006426">
    <property type="term" value="P:glycyl-tRNA aminoacylation"/>
    <property type="evidence" value="ECO:0007669"/>
    <property type="project" value="UniProtKB-UniRule"/>
</dbReference>
<dbReference type="FunFam" id="3.30.930.10:FF:000006">
    <property type="entry name" value="Glycine--tRNA ligase alpha subunit"/>
    <property type="match status" value="1"/>
</dbReference>
<dbReference type="Gene3D" id="3.30.930.10">
    <property type="entry name" value="Bira Bifunctional Protein, Domain 2"/>
    <property type="match status" value="1"/>
</dbReference>
<dbReference type="Gene3D" id="1.20.58.180">
    <property type="entry name" value="Class II aaRS and biotin synthetases, domain 2"/>
    <property type="match status" value="1"/>
</dbReference>
<dbReference type="HAMAP" id="MF_00254">
    <property type="entry name" value="Gly_tRNA_synth_alpha"/>
    <property type="match status" value="1"/>
</dbReference>
<dbReference type="InterPro" id="IPR045864">
    <property type="entry name" value="aa-tRNA-synth_II/BPL/LPL"/>
</dbReference>
<dbReference type="InterPro" id="IPR006194">
    <property type="entry name" value="Gly-tRNA-synth_heterodimer"/>
</dbReference>
<dbReference type="InterPro" id="IPR002310">
    <property type="entry name" value="Gly-tRNA_ligase_asu"/>
</dbReference>
<dbReference type="NCBIfam" id="TIGR00388">
    <property type="entry name" value="glyQ"/>
    <property type="match status" value="1"/>
</dbReference>
<dbReference type="NCBIfam" id="NF006827">
    <property type="entry name" value="PRK09348.1"/>
    <property type="match status" value="1"/>
</dbReference>
<dbReference type="PANTHER" id="PTHR30075:SF2">
    <property type="entry name" value="GLYCINE--TRNA LIGASE, CHLOROPLASTIC_MITOCHONDRIAL 2"/>
    <property type="match status" value="1"/>
</dbReference>
<dbReference type="PANTHER" id="PTHR30075">
    <property type="entry name" value="GLYCYL-TRNA SYNTHETASE"/>
    <property type="match status" value="1"/>
</dbReference>
<dbReference type="Pfam" id="PF02091">
    <property type="entry name" value="tRNA-synt_2e"/>
    <property type="match status" value="1"/>
</dbReference>
<dbReference type="PRINTS" id="PR01044">
    <property type="entry name" value="TRNASYNTHGA"/>
</dbReference>
<dbReference type="SUPFAM" id="SSF55681">
    <property type="entry name" value="Class II aaRS and biotin synthetases"/>
    <property type="match status" value="1"/>
</dbReference>
<dbReference type="PROSITE" id="PS50861">
    <property type="entry name" value="AA_TRNA_LIGASE_II_GLYAB"/>
    <property type="match status" value="1"/>
</dbReference>
<protein>
    <recommendedName>
        <fullName evidence="1">Glycine--tRNA ligase alpha subunit</fullName>
        <ecNumber evidence="1">6.1.1.14</ecNumber>
    </recommendedName>
    <alternativeName>
        <fullName evidence="1">Glycyl-tRNA synthetase alpha subunit</fullName>
        <shortName evidence="1">GlyRS</shortName>
    </alternativeName>
</protein>
<name>SYGA_RICTY</name>
<comment type="catalytic activity">
    <reaction evidence="1">
        <text>tRNA(Gly) + glycine + ATP = glycyl-tRNA(Gly) + AMP + diphosphate</text>
        <dbReference type="Rhea" id="RHEA:16013"/>
        <dbReference type="Rhea" id="RHEA-COMP:9664"/>
        <dbReference type="Rhea" id="RHEA-COMP:9683"/>
        <dbReference type="ChEBI" id="CHEBI:30616"/>
        <dbReference type="ChEBI" id="CHEBI:33019"/>
        <dbReference type="ChEBI" id="CHEBI:57305"/>
        <dbReference type="ChEBI" id="CHEBI:78442"/>
        <dbReference type="ChEBI" id="CHEBI:78522"/>
        <dbReference type="ChEBI" id="CHEBI:456215"/>
        <dbReference type="EC" id="6.1.1.14"/>
    </reaction>
</comment>
<comment type="subunit">
    <text evidence="1">Tetramer of two alpha and two beta subunits.</text>
</comment>
<comment type="subcellular location">
    <subcellularLocation>
        <location evidence="1">Cytoplasm</location>
    </subcellularLocation>
</comment>
<comment type="similarity">
    <text evidence="1">Belongs to the class-II aminoacyl-tRNA synthetase family.</text>
</comment>
<keyword id="KW-0030">Aminoacyl-tRNA synthetase</keyword>
<keyword id="KW-0067">ATP-binding</keyword>
<keyword id="KW-0963">Cytoplasm</keyword>
<keyword id="KW-0436">Ligase</keyword>
<keyword id="KW-0547">Nucleotide-binding</keyword>
<keyword id="KW-0648">Protein biosynthesis</keyword>
<accession>Q68VR3</accession>
<evidence type="ECO:0000255" key="1">
    <source>
        <dbReference type="HAMAP-Rule" id="MF_00254"/>
    </source>
</evidence>
<gene>
    <name evidence="1" type="primary">glyQ</name>
    <name type="ordered locus">RT0839</name>
</gene>